<reference key="1">
    <citation type="submission" date="2004-11" db="EMBL/GenBank/DDBJ databases">
        <authorList>
            <consortium name="The German cDNA consortium"/>
        </authorList>
    </citation>
    <scope>NUCLEOTIDE SEQUENCE [LARGE SCALE MRNA]</scope>
    <source>
        <tissue>Kidney</tissue>
    </source>
</reference>
<proteinExistence type="evidence at transcript level"/>
<name>ACBD4_PONAB</name>
<dbReference type="EMBL" id="CR860066">
    <property type="protein sequence ID" value="CAH92214.1"/>
    <property type="molecule type" value="mRNA"/>
</dbReference>
<dbReference type="RefSeq" id="NP_001127524.1">
    <property type="nucleotide sequence ID" value="NM_001134052.2"/>
</dbReference>
<dbReference type="RefSeq" id="XP_063574008.1">
    <property type="nucleotide sequence ID" value="XM_063717938.1"/>
</dbReference>
<dbReference type="SMR" id="Q5R7P6"/>
<dbReference type="FunCoup" id="Q5R7P6">
    <property type="interactions" value="450"/>
</dbReference>
<dbReference type="STRING" id="9601.ENSPPYP00000009339"/>
<dbReference type="Ensembl" id="ENSPPYT00000053415.1">
    <property type="protein sequence ID" value="ENSPPYP00000039901.1"/>
    <property type="gene ID" value="ENSPPYG00000008311.3"/>
</dbReference>
<dbReference type="GeneID" id="100174600"/>
<dbReference type="KEGG" id="pon:100174600"/>
<dbReference type="CTD" id="79777"/>
<dbReference type="eggNOG" id="KOG0817">
    <property type="taxonomic scope" value="Eukaryota"/>
</dbReference>
<dbReference type="GeneTree" id="ENSGT00940000160739"/>
<dbReference type="InParanoid" id="Q5R7P6"/>
<dbReference type="OrthoDB" id="71307at2759"/>
<dbReference type="Proteomes" id="UP000001595">
    <property type="component" value="Chromosome 17"/>
</dbReference>
<dbReference type="GO" id="GO:0005737">
    <property type="term" value="C:cytoplasm"/>
    <property type="evidence" value="ECO:0007669"/>
    <property type="project" value="TreeGrafter"/>
</dbReference>
<dbReference type="GO" id="GO:0000062">
    <property type="term" value="F:fatty-acyl-CoA binding"/>
    <property type="evidence" value="ECO:0007669"/>
    <property type="project" value="InterPro"/>
</dbReference>
<dbReference type="GO" id="GO:0006631">
    <property type="term" value="P:fatty acid metabolic process"/>
    <property type="evidence" value="ECO:0007669"/>
    <property type="project" value="TreeGrafter"/>
</dbReference>
<dbReference type="CDD" id="cd00435">
    <property type="entry name" value="ACBP"/>
    <property type="match status" value="1"/>
</dbReference>
<dbReference type="FunFam" id="1.20.80.10:FF:000010">
    <property type="entry name" value="Acyl-CoA-binding domain-containing protein 5"/>
    <property type="match status" value="1"/>
</dbReference>
<dbReference type="Gene3D" id="1.20.80.10">
    <property type="match status" value="1"/>
</dbReference>
<dbReference type="InterPro" id="IPR022408">
    <property type="entry name" value="Acyl-CoA-binding_prot_CS"/>
</dbReference>
<dbReference type="InterPro" id="IPR000582">
    <property type="entry name" value="Acyl-CoA-binding_protein"/>
</dbReference>
<dbReference type="InterPro" id="IPR035984">
    <property type="entry name" value="Acyl-CoA-binding_sf"/>
</dbReference>
<dbReference type="InterPro" id="IPR014352">
    <property type="entry name" value="FERM/acyl-CoA-bd_prot_sf"/>
</dbReference>
<dbReference type="PANTHER" id="PTHR23310:SF53">
    <property type="entry name" value="ACYL-COA-BINDING DOMAIN-CONTAINING PROTEIN 4"/>
    <property type="match status" value="1"/>
</dbReference>
<dbReference type="PANTHER" id="PTHR23310">
    <property type="entry name" value="ACYL-COA-BINDING PROTEIN, ACBP"/>
    <property type="match status" value="1"/>
</dbReference>
<dbReference type="Pfam" id="PF00887">
    <property type="entry name" value="ACBP"/>
    <property type="match status" value="1"/>
</dbReference>
<dbReference type="PRINTS" id="PR00689">
    <property type="entry name" value="ACOABINDINGP"/>
</dbReference>
<dbReference type="SUPFAM" id="SSF47027">
    <property type="entry name" value="Acyl-CoA binding protein"/>
    <property type="match status" value="1"/>
</dbReference>
<dbReference type="PROSITE" id="PS00880">
    <property type="entry name" value="ACB_1"/>
    <property type="match status" value="1"/>
</dbReference>
<dbReference type="PROSITE" id="PS51228">
    <property type="entry name" value="ACB_2"/>
    <property type="match status" value="1"/>
</dbReference>
<keyword id="KW-0446">Lipid-binding</keyword>
<keyword id="KW-0597">Phosphoprotein</keyword>
<keyword id="KW-1185">Reference proteome</keyword>
<comment type="function">
    <text evidence="1">Binds medium- and long-chain acyl-CoA esters and may function as an intracellular carrier of acyl-CoA esters.</text>
</comment>
<sequence>MGTEKESPEPDCQKQFQAAVSVIQNLPKNGSYRPSYEEMLRFYSYYKQATMGPCLVPRPGFWDPIGRYKWDAWNSLGKMSREEAMSAYITEMKLVAQKVIDTVPLGEVAEDMFAYFEPLYQVIPDMPRPPETFLRRVTGWKEQVVNGDVGAVSEPPCLPKEPAPPSPESHSPRDLDSEVFCDSLEQLEPELVWTEQRAASGEKRDPRNSPVPPTEKEAAAQAQCSAMAPWAPRARAALLPPVALRRPVALPNVSDPKEVTVSGGVSAAN</sequence>
<accession>Q5R7P6</accession>
<protein>
    <recommendedName>
        <fullName>Acyl-CoA-binding domain-containing protein 4</fullName>
    </recommendedName>
</protein>
<evidence type="ECO:0000250" key="1"/>
<evidence type="ECO:0000250" key="2">
    <source>
        <dbReference type="UniProtKB" id="Q8NC06"/>
    </source>
</evidence>
<evidence type="ECO:0000255" key="3">
    <source>
        <dbReference type="PROSITE-ProRule" id="PRU00573"/>
    </source>
</evidence>
<evidence type="ECO:0000256" key="4">
    <source>
        <dbReference type="SAM" id="MobiDB-lite"/>
    </source>
</evidence>
<gene>
    <name type="primary">ACBD4</name>
</gene>
<feature type="chain" id="PRO_0000214033" description="Acyl-CoA-binding domain-containing protein 4">
    <location>
        <begin position="1"/>
        <end position="269"/>
    </location>
</feature>
<feature type="domain" description="ACB" evidence="3">
    <location>
        <begin position="12"/>
        <end position="101"/>
    </location>
</feature>
<feature type="region of interest" description="Disordered" evidence="4">
    <location>
        <begin position="150"/>
        <end position="175"/>
    </location>
</feature>
<feature type="region of interest" description="Disordered" evidence="4">
    <location>
        <begin position="195"/>
        <end position="226"/>
    </location>
</feature>
<feature type="region of interest" description="Disordered" evidence="4">
    <location>
        <begin position="248"/>
        <end position="269"/>
    </location>
</feature>
<feature type="compositionally biased region" description="Pro residues" evidence="4">
    <location>
        <begin position="156"/>
        <end position="167"/>
    </location>
</feature>
<feature type="binding site" evidence="1">
    <location>
        <begin position="23"/>
        <end position="32"/>
    </location>
    <ligand>
        <name>an acyl-CoA</name>
        <dbReference type="ChEBI" id="CHEBI:58342"/>
    </ligand>
</feature>
<feature type="binding site" evidence="1">
    <location>
        <begin position="43"/>
        <end position="47"/>
    </location>
    <ligand>
        <name>an acyl-CoA</name>
        <dbReference type="ChEBI" id="CHEBI:58342"/>
    </ligand>
</feature>
<feature type="binding site" evidence="1">
    <location>
        <position position="69"/>
    </location>
    <ligand>
        <name>an acyl-CoA</name>
        <dbReference type="ChEBI" id="CHEBI:58342"/>
    </ligand>
</feature>
<feature type="binding site" evidence="1">
    <location>
        <position position="88"/>
    </location>
    <ligand>
        <name>an acyl-CoA</name>
        <dbReference type="ChEBI" id="CHEBI:58342"/>
    </ligand>
</feature>
<feature type="modified residue" description="Phosphoserine" evidence="2">
    <location>
        <position position="166"/>
    </location>
</feature>
<feature type="modified residue" description="Phosphoserine" evidence="2">
    <location>
        <position position="171"/>
    </location>
</feature>
<organism>
    <name type="scientific">Pongo abelii</name>
    <name type="common">Sumatran orangutan</name>
    <name type="synonym">Pongo pygmaeus abelii</name>
    <dbReference type="NCBI Taxonomy" id="9601"/>
    <lineage>
        <taxon>Eukaryota</taxon>
        <taxon>Metazoa</taxon>
        <taxon>Chordata</taxon>
        <taxon>Craniata</taxon>
        <taxon>Vertebrata</taxon>
        <taxon>Euteleostomi</taxon>
        <taxon>Mammalia</taxon>
        <taxon>Eutheria</taxon>
        <taxon>Euarchontoglires</taxon>
        <taxon>Primates</taxon>
        <taxon>Haplorrhini</taxon>
        <taxon>Catarrhini</taxon>
        <taxon>Hominidae</taxon>
        <taxon>Pongo</taxon>
    </lineage>
</organism>